<comment type="function">
    <text evidence="1">This is one of the proteins that bind and probably mediate the attachment of the 5S RNA into the large ribosomal subunit, where it forms part of the central protuberance.</text>
</comment>
<comment type="subunit">
    <text evidence="1">Part of the 50S ribosomal subunit; part of the 5S rRNA/L5/L18/L25 subcomplex. Contacts the 5S and 23S rRNAs.</text>
</comment>
<comment type="similarity">
    <text evidence="1">Belongs to the universal ribosomal protein uL18 family.</text>
</comment>
<sequence length="117" mass="12770">MDKKSARIRRATRARRKLQELGATRLVVHRTPRHIYAQVIAPNGSEVLVAASTVEKAIAEQLKYTGNKDAAAAVGKAVAERALEKGIKDVSFDRSGFQYHGRVQALADAAREAGLQF</sequence>
<organism>
    <name type="scientific">Escherichia coli O8 (strain IAI1)</name>
    <dbReference type="NCBI Taxonomy" id="585034"/>
    <lineage>
        <taxon>Bacteria</taxon>
        <taxon>Pseudomonadati</taxon>
        <taxon>Pseudomonadota</taxon>
        <taxon>Gammaproteobacteria</taxon>
        <taxon>Enterobacterales</taxon>
        <taxon>Enterobacteriaceae</taxon>
        <taxon>Escherichia</taxon>
    </lineage>
</organism>
<evidence type="ECO:0000255" key="1">
    <source>
        <dbReference type="HAMAP-Rule" id="MF_01337"/>
    </source>
</evidence>
<evidence type="ECO:0000305" key="2"/>
<reference key="1">
    <citation type="journal article" date="2009" name="PLoS Genet.">
        <title>Organised genome dynamics in the Escherichia coli species results in highly diverse adaptive paths.</title>
        <authorList>
            <person name="Touchon M."/>
            <person name="Hoede C."/>
            <person name="Tenaillon O."/>
            <person name="Barbe V."/>
            <person name="Baeriswyl S."/>
            <person name="Bidet P."/>
            <person name="Bingen E."/>
            <person name="Bonacorsi S."/>
            <person name="Bouchier C."/>
            <person name="Bouvet O."/>
            <person name="Calteau A."/>
            <person name="Chiapello H."/>
            <person name="Clermont O."/>
            <person name="Cruveiller S."/>
            <person name="Danchin A."/>
            <person name="Diard M."/>
            <person name="Dossat C."/>
            <person name="Karoui M.E."/>
            <person name="Frapy E."/>
            <person name="Garry L."/>
            <person name="Ghigo J.M."/>
            <person name="Gilles A.M."/>
            <person name="Johnson J."/>
            <person name="Le Bouguenec C."/>
            <person name="Lescat M."/>
            <person name="Mangenot S."/>
            <person name="Martinez-Jehanne V."/>
            <person name="Matic I."/>
            <person name="Nassif X."/>
            <person name="Oztas S."/>
            <person name="Petit M.A."/>
            <person name="Pichon C."/>
            <person name="Rouy Z."/>
            <person name="Ruf C.S."/>
            <person name="Schneider D."/>
            <person name="Tourret J."/>
            <person name="Vacherie B."/>
            <person name="Vallenet D."/>
            <person name="Medigue C."/>
            <person name="Rocha E.P.C."/>
            <person name="Denamur E."/>
        </authorList>
    </citation>
    <scope>NUCLEOTIDE SEQUENCE [LARGE SCALE GENOMIC DNA]</scope>
    <source>
        <strain>IAI1</strain>
    </source>
</reference>
<name>RL18_ECO8A</name>
<accession>B7M1L8</accession>
<feature type="chain" id="PRO_1000142659" description="Large ribosomal subunit protein uL18">
    <location>
        <begin position="1"/>
        <end position="117"/>
    </location>
</feature>
<gene>
    <name evidence="1" type="primary">rplR</name>
    <name type="ordered locus">ECIAI1_3453</name>
</gene>
<keyword id="KW-0687">Ribonucleoprotein</keyword>
<keyword id="KW-0689">Ribosomal protein</keyword>
<keyword id="KW-0694">RNA-binding</keyword>
<keyword id="KW-0699">rRNA-binding</keyword>
<proteinExistence type="inferred from homology"/>
<protein>
    <recommendedName>
        <fullName evidence="1">Large ribosomal subunit protein uL18</fullName>
    </recommendedName>
    <alternativeName>
        <fullName evidence="2">50S ribosomal protein L18</fullName>
    </alternativeName>
</protein>
<dbReference type="EMBL" id="CU928160">
    <property type="protein sequence ID" value="CAR00255.1"/>
    <property type="molecule type" value="Genomic_DNA"/>
</dbReference>
<dbReference type="RefSeq" id="WP_000358960.1">
    <property type="nucleotide sequence ID" value="NC_011741.1"/>
</dbReference>
<dbReference type="SMR" id="B7M1L8"/>
<dbReference type="GeneID" id="98390426"/>
<dbReference type="KEGG" id="ecr:ECIAI1_3453"/>
<dbReference type="HOGENOM" id="CLU_098841_0_1_6"/>
<dbReference type="GO" id="GO:0022625">
    <property type="term" value="C:cytosolic large ribosomal subunit"/>
    <property type="evidence" value="ECO:0007669"/>
    <property type="project" value="TreeGrafter"/>
</dbReference>
<dbReference type="GO" id="GO:0008097">
    <property type="term" value="F:5S rRNA binding"/>
    <property type="evidence" value="ECO:0007669"/>
    <property type="project" value="TreeGrafter"/>
</dbReference>
<dbReference type="GO" id="GO:0003735">
    <property type="term" value="F:structural constituent of ribosome"/>
    <property type="evidence" value="ECO:0007669"/>
    <property type="project" value="InterPro"/>
</dbReference>
<dbReference type="GO" id="GO:0006412">
    <property type="term" value="P:translation"/>
    <property type="evidence" value="ECO:0007669"/>
    <property type="project" value="UniProtKB-UniRule"/>
</dbReference>
<dbReference type="CDD" id="cd00432">
    <property type="entry name" value="Ribosomal_L18_L5e"/>
    <property type="match status" value="1"/>
</dbReference>
<dbReference type="FunFam" id="3.30.420.100:FF:000001">
    <property type="entry name" value="50S ribosomal protein L18"/>
    <property type="match status" value="1"/>
</dbReference>
<dbReference type="Gene3D" id="3.30.420.100">
    <property type="match status" value="1"/>
</dbReference>
<dbReference type="HAMAP" id="MF_01337_B">
    <property type="entry name" value="Ribosomal_uL18_B"/>
    <property type="match status" value="1"/>
</dbReference>
<dbReference type="InterPro" id="IPR004389">
    <property type="entry name" value="Ribosomal_uL18_bac-type"/>
</dbReference>
<dbReference type="InterPro" id="IPR005484">
    <property type="entry name" value="Ribosomal_uL18_bac/euk"/>
</dbReference>
<dbReference type="NCBIfam" id="TIGR00060">
    <property type="entry name" value="L18_bact"/>
    <property type="match status" value="1"/>
</dbReference>
<dbReference type="PANTHER" id="PTHR12899">
    <property type="entry name" value="39S RIBOSOMAL PROTEIN L18, MITOCHONDRIAL"/>
    <property type="match status" value="1"/>
</dbReference>
<dbReference type="PANTHER" id="PTHR12899:SF3">
    <property type="entry name" value="LARGE RIBOSOMAL SUBUNIT PROTEIN UL18M"/>
    <property type="match status" value="1"/>
</dbReference>
<dbReference type="Pfam" id="PF00861">
    <property type="entry name" value="Ribosomal_L18p"/>
    <property type="match status" value="1"/>
</dbReference>
<dbReference type="SUPFAM" id="SSF53137">
    <property type="entry name" value="Translational machinery components"/>
    <property type="match status" value="1"/>
</dbReference>